<dbReference type="EC" id="2.1.1.163" evidence="1"/>
<dbReference type="EMBL" id="AP006716">
    <property type="protein sequence ID" value="BAE04752.1"/>
    <property type="molecule type" value="Genomic_DNA"/>
</dbReference>
<dbReference type="RefSeq" id="WP_011275738.1">
    <property type="nucleotide sequence ID" value="NC_007168.1"/>
</dbReference>
<dbReference type="SMR" id="Q4L6H3"/>
<dbReference type="KEGG" id="sha:SH1443"/>
<dbReference type="eggNOG" id="COG2226">
    <property type="taxonomic scope" value="Bacteria"/>
</dbReference>
<dbReference type="HOGENOM" id="CLU_037990_0_0_9"/>
<dbReference type="OrthoDB" id="9808140at2"/>
<dbReference type="UniPathway" id="UPA00079">
    <property type="reaction ID" value="UER00169"/>
</dbReference>
<dbReference type="Proteomes" id="UP000000543">
    <property type="component" value="Chromosome"/>
</dbReference>
<dbReference type="GO" id="GO:0043770">
    <property type="term" value="F:demethylmenaquinone methyltransferase activity"/>
    <property type="evidence" value="ECO:0007669"/>
    <property type="project" value="UniProtKB-UniRule"/>
</dbReference>
<dbReference type="GO" id="GO:0009234">
    <property type="term" value="P:menaquinone biosynthetic process"/>
    <property type="evidence" value="ECO:0007669"/>
    <property type="project" value="UniProtKB-UniRule"/>
</dbReference>
<dbReference type="GO" id="GO:0032259">
    <property type="term" value="P:methylation"/>
    <property type="evidence" value="ECO:0007669"/>
    <property type="project" value="UniProtKB-KW"/>
</dbReference>
<dbReference type="CDD" id="cd02440">
    <property type="entry name" value="AdoMet_MTases"/>
    <property type="match status" value="1"/>
</dbReference>
<dbReference type="FunFam" id="3.40.50.150:FF:000086">
    <property type="entry name" value="Demethylmenaquinone methyltransferase"/>
    <property type="match status" value="1"/>
</dbReference>
<dbReference type="Gene3D" id="3.40.50.150">
    <property type="entry name" value="Vaccinia Virus protein VP39"/>
    <property type="match status" value="1"/>
</dbReference>
<dbReference type="HAMAP" id="MF_01813">
    <property type="entry name" value="MenG_UbiE_methyltr"/>
    <property type="match status" value="1"/>
</dbReference>
<dbReference type="InterPro" id="IPR029063">
    <property type="entry name" value="SAM-dependent_MTases_sf"/>
</dbReference>
<dbReference type="InterPro" id="IPR004033">
    <property type="entry name" value="UbiE/COQ5_MeTrFase"/>
</dbReference>
<dbReference type="InterPro" id="IPR023576">
    <property type="entry name" value="UbiE/COQ5_MeTrFase_CS"/>
</dbReference>
<dbReference type="NCBIfam" id="TIGR01934">
    <property type="entry name" value="MenG_MenH_UbiE"/>
    <property type="match status" value="1"/>
</dbReference>
<dbReference type="NCBIfam" id="NF001243">
    <property type="entry name" value="PRK00216.1-4"/>
    <property type="match status" value="1"/>
</dbReference>
<dbReference type="NCBIfam" id="NF001244">
    <property type="entry name" value="PRK00216.1-5"/>
    <property type="match status" value="1"/>
</dbReference>
<dbReference type="PANTHER" id="PTHR43591:SF24">
    <property type="entry name" value="2-METHOXY-6-POLYPRENYL-1,4-BENZOQUINOL METHYLASE, MITOCHONDRIAL"/>
    <property type="match status" value="1"/>
</dbReference>
<dbReference type="PANTHER" id="PTHR43591">
    <property type="entry name" value="METHYLTRANSFERASE"/>
    <property type="match status" value="1"/>
</dbReference>
<dbReference type="Pfam" id="PF01209">
    <property type="entry name" value="Ubie_methyltran"/>
    <property type="match status" value="1"/>
</dbReference>
<dbReference type="SUPFAM" id="SSF53335">
    <property type="entry name" value="S-adenosyl-L-methionine-dependent methyltransferases"/>
    <property type="match status" value="1"/>
</dbReference>
<dbReference type="PROSITE" id="PS51608">
    <property type="entry name" value="SAM_MT_UBIE"/>
    <property type="match status" value="1"/>
</dbReference>
<dbReference type="PROSITE" id="PS01183">
    <property type="entry name" value="UBIE_1"/>
    <property type="match status" value="1"/>
</dbReference>
<dbReference type="PROSITE" id="PS01184">
    <property type="entry name" value="UBIE_2"/>
    <property type="match status" value="1"/>
</dbReference>
<gene>
    <name evidence="1" type="primary">menG</name>
    <name type="ordered locus">SH1443</name>
</gene>
<feature type="chain" id="PRO_0000193335" description="Demethylmenaquinone methyltransferase">
    <location>
        <begin position="1"/>
        <end position="239"/>
    </location>
</feature>
<feature type="binding site" evidence="1">
    <location>
        <position position="60"/>
    </location>
    <ligand>
        <name>S-adenosyl-L-methionine</name>
        <dbReference type="ChEBI" id="CHEBI:59789"/>
    </ligand>
</feature>
<feature type="binding site" evidence="1">
    <location>
        <position position="81"/>
    </location>
    <ligand>
        <name>S-adenosyl-L-methionine</name>
        <dbReference type="ChEBI" id="CHEBI:59789"/>
    </ligand>
</feature>
<feature type="binding site" evidence="1">
    <location>
        <begin position="106"/>
        <end position="107"/>
    </location>
    <ligand>
        <name>S-adenosyl-L-methionine</name>
        <dbReference type="ChEBI" id="CHEBI:59789"/>
    </ligand>
</feature>
<protein>
    <recommendedName>
        <fullName evidence="1">Demethylmenaquinone methyltransferase</fullName>
        <ecNumber evidence="1">2.1.1.163</ecNumber>
    </recommendedName>
</protein>
<name>MENG_STAHJ</name>
<proteinExistence type="inferred from homology"/>
<reference key="1">
    <citation type="journal article" date="2005" name="J. Bacteriol.">
        <title>Whole-genome sequencing of Staphylococcus haemolyticus uncovers the extreme plasticity of its genome and the evolution of human-colonizing staphylococcal species.</title>
        <authorList>
            <person name="Takeuchi F."/>
            <person name="Watanabe S."/>
            <person name="Baba T."/>
            <person name="Yuzawa H."/>
            <person name="Ito T."/>
            <person name="Morimoto Y."/>
            <person name="Kuroda M."/>
            <person name="Cui L."/>
            <person name="Takahashi M."/>
            <person name="Ankai A."/>
            <person name="Baba S."/>
            <person name="Fukui S."/>
            <person name="Lee J.C."/>
            <person name="Hiramatsu K."/>
        </authorList>
    </citation>
    <scope>NUCLEOTIDE SEQUENCE [LARGE SCALE GENOMIC DNA]</scope>
    <source>
        <strain>JCSC1435</strain>
    </source>
</reference>
<evidence type="ECO:0000255" key="1">
    <source>
        <dbReference type="HAMAP-Rule" id="MF_01813"/>
    </source>
</evidence>
<keyword id="KW-0474">Menaquinone biosynthesis</keyword>
<keyword id="KW-0489">Methyltransferase</keyword>
<keyword id="KW-0949">S-adenosyl-L-methionine</keyword>
<keyword id="KW-0808">Transferase</keyword>
<comment type="function">
    <text evidence="1">Methyltransferase required for the conversion of demethylmenaquinol (DMKH2) to menaquinol (MKH2).</text>
</comment>
<comment type="catalytic activity">
    <reaction evidence="1">
        <text>a 2-demethylmenaquinol + S-adenosyl-L-methionine = a menaquinol + S-adenosyl-L-homocysteine + H(+)</text>
        <dbReference type="Rhea" id="RHEA:42640"/>
        <dbReference type="Rhea" id="RHEA-COMP:9539"/>
        <dbReference type="Rhea" id="RHEA-COMP:9563"/>
        <dbReference type="ChEBI" id="CHEBI:15378"/>
        <dbReference type="ChEBI" id="CHEBI:18151"/>
        <dbReference type="ChEBI" id="CHEBI:55437"/>
        <dbReference type="ChEBI" id="CHEBI:57856"/>
        <dbReference type="ChEBI" id="CHEBI:59789"/>
        <dbReference type="EC" id="2.1.1.163"/>
    </reaction>
</comment>
<comment type="pathway">
    <text evidence="1">Quinol/quinone metabolism; menaquinone biosynthesis; menaquinol from 1,4-dihydroxy-2-naphthoate: step 2/2.</text>
</comment>
<comment type="similarity">
    <text evidence="1">Belongs to the class I-like SAM-binding methyltransferase superfamily. MenG/UbiE family.</text>
</comment>
<organism>
    <name type="scientific">Staphylococcus haemolyticus (strain JCSC1435)</name>
    <dbReference type="NCBI Taxonomy" id="279808"/>
    <lineage>
        <taxon>Bacteria</taxon>
        <taxon>Bacillati</taxon>
        <taxon>Bacillota</taxon>
        <taxon>Bacilli</taxon>
        <taxon>Bacillales</taxon>
        <taxon>Staphylococcaceae</taxon>
        <taxon>Staphylococcus</taxon>
    </lineage>
</organism>
<sequence>MTENNAKKEQVHTVFQNISSKYDRLNNIISFEQHKVWRKHVMKDMHVKVGSKALDVCCGTADWTIALSKAVGAHGEVTGLDFSENMLEVGKEKTKHMNNIHLVHGDAMNLPFEDNSFDYVTIGFGLRNVPDYLVALKEMNRVLKPGGMIVCLETSQPTMPVFKQVYKLYFKFVMPVFGKLFAKSKEEYEWLQQSTFDFPDKDKLKQLFEQAGFNKIKIRSFTGGVAAMHLGYKQKSSTK</sequence>
<accession>Q4L6H3</accession>